<gene>
    <name type="primary">RLN</name>
</gene>
<name>RELX_CAVPO</name>
<sequence length="160" mass="17892">GFLDKVIKVCGRDLVRIKIDICGKILLGDMTTGQEKQRILGSGQSAEIMPSSINKEVDSLNMLESIANLPEELRAMLPEKQPSSPQLQQYVPALKNSNVAVKELNKIIRGRQEEAEDNSHSLLKDFNLNIYSPKKRQLDMTVSEKCCQVGCTRRFIANSC</sequence>
<protein>
    <recommendedName>
        <fullName>Prorelaxin</fullName>
    </recommendedName>
    <component>
        <recommendedName>
            <fullName>Relaxin B chain</fullName>
        </recommendedName>
    </component>
    <component>
        <recommendedName>
            <fullName>Relaxin A chain</fullName>
        </recommendedName>
    </component>
</protein>
<organism>
    <name type="scientific">Cavia porcellus</name>
    <name type="common">Guinea pig</name>
    <dbReference type="NCBI Taxonomy" id="10141"/>
    <lineage>
        <taxon>Eukaryota</taxon>
        <taxon>Metazoa</taxon>
        <taxon>Chordata</taxon>
        <taxon>Craniata</taxon>
        <taxon>Vertebrata</taxon>
        <taxon>Euteleostomi</taxon>
        <taxon>Mammalia</taxon>
        <taxon>Eutheria</taxon>
        <taxon>Euarchontoglires</taxon>
        <taxon>Glires</taxon>
        <taxon>Rodentia</taxon>
        <taxon>Hystricomorpha</taxon>
        <taxon>Caviidae</taxon>
        <taxon>Cavia</taxon>
    </lineage>
</organism>
<reference key="1">
    <citation type="journal article" date="1992" name="Endocrinology">
        <title>The complementary deoxyribonucleic acid sequence of guinea pig endometrial prorelaxin.</title>
        <authorList>
            <person name="Lee Y.A."/>
            <person name="Bryant-Greenwood G.D."/>
            <person name="Mandel M."/>
            <person name="Greenwood F.C."/>
        </authorList>
    </citation>
    <scope>NUCLEOTIDE SEQUENCE [MRNA]</scope>
    <source>
        <tissue>Endometrium</tissue>
    </source>
</reference>
<proteinExistence type="evidence at transcript level"/>
<evidence type="ECO:0000250" key="1"/>
<evidence type="ECO:0000305" key="2"/>
<accession>P51453</accession>
<dbReference type="EMBL" id="S85964">
    <property type="protein sequence ID" value="AAB21586.1"/>
    <property type="molecule type" value="mRNA"/>
</dbReference>
<dbReference type="PIR" id="A49194">
    <property type="entry name" value="A49194"/>
</dbReference>
<dbReference type="SMR" id="P51453"/>
<dbReference type="FunCoup" id="P51453">
    <property type="interactions" value="66"/>
</dbReference>
<dbReference type="STRING" id="10141.ENSCPOP00000001237"/>
<dbReference type="InParanoid" id="P51453"/>
<dbReference type="Proteomes" id="UP000005447">
    <property type="component" value="Unassembled WGS sequence"/>
</dbReference>
<dbReference type="GO" id="GO:0005576">
    <property type="term" value="C:extracellular region"/>
    <property type="evidence" value="ECO:0007669"/>
    <property type="project" value="UniProtKB-SubCell"/>
</dbReference>
<dbReference type="GO" id="GO:0005179">
    <property type="term" value="F:hormone activity"/>
    <property type="evidence" value="ECO:0007669"/>
    <property type="project" value="UniProtKB-KW"/>
</dbReference>
<dbReference type="CDD" id="cd04365">
    <property type="entry name" value="IlGF_relaxin_like"/>
    <property type="match status" value="1"/>
</dbReference>
<dbReference type="InterPro" id="IPR016179">
    <property type="entry name" value="Insulin-like"/>
</dbReference>
<dbReference type="InterPro" id="IPR036438">
    <property type="entry name" value="Insulin-like_sf"/>
</dbReference>
<dbReference type="InterPro" id="IPR022353">
    <property type="entry name" value="Insulin_CS"/>
</dbReference>
<dbReference type="InterPro" id="IPR022421">
    <property type="entry name" value="Relaxin"/>
</dbReference>
<dbReference type="InterPro" id="IPR051042">
    <property type="entry name" value="Repro_Hormone_Insulin-like"/>
</dbReference>
<dbReference type="PANTHER" id="PTHR12004:SF13">
    <property type="entry name" value="PRORELAXIN H2"/>
    <property type="match status" value="1"/>
</dbReference>
<dbReference type="PANTHER" id="PTHR12004">
    <property type="entry name" value="RELAXIN"/>
    <property type="match status" value="1"/>
</dbReference>
<dbReference type="Pfam" id="PF00049">
    <property type="entry name" value="Insulin"/>
    <property type="match status" value="1"/>
</dbReference>
<dbReference type="PRINTS" id="PR02004">
    <property type="entry name" value="RELAXIN"/>
</dbReference>
<dbReference type="SMART" id="SM00078">
    <property type="entry name" value="IlGF"/>
    <property type="match status" value="1"/>
</dbReference>
<dbReference type="SUPFAM" id="SSF56994">
    <property type="entry name" value="Insulin-like"/>
    <property type="match status" value="1"/>
</dbReference>
<dbReference type="PROSITE" id="PS00262">
    <property type="entry name" value="INSULIN"/>
    <property type="match status" value="1"/>
</dbReference>
<comment type="function">
    <text>Relaxin is an ovarian hormone that acts with estrogen to produce dilatation of the birth canal in many mammals. It bears mature young, and allows separation of the pelvic bones.</text>
</comment>
<comment type="subunit">
    <text>Heterodimer of a B chain and an A chain linked by two disulfide bonds.</text>
</comment>
<comment type="subcellular location">
    <subcellularLocation>
        <location>Secreted</location>
    </subcellularLocation>
</comment>
<comment type="tissue specificity">
    <text>Expressed in the endometrium during pregnancy and in mammary gland during lactation.</text>
</comment>
<comment type="similarity">
    <text evidence="2">Belongs to the insulin family.</text>
</comment>
<keyword id="KW-0165">Cleavage on pair of basic residues</keyword>
<keyword id="KW-1015">Disulfide bond</keyword>
<keyword id="KW-0372">Hormone</keyword>
<keyword id="KW-1185">Reference proteome</keyword>
<keyword id="KW-0964">Secreted</keyword>
<feature type="peptide" id="PRO_0000016070" description="Relaxin B chain" evidence="1">
    <location>
        <begin position="1" status="less than"/>
        <end position="33"/>
    </location>
</feature>
<feature type="propeptide" id="PRO_0000016071" description="Connecting peptide" evidence="1">
    <location>
        <begin position="34"/>
        <end position="133"/>
    </location>
</feature>
<feature type="peptide" id="PRO_0000016072" description="Relaxin A chain" evidence="1">
    <location>
        <begin position="137"/>
        <end position="160"/>
    </location>
</feature>
<feature type="disulfide bond" description="Interchain (between B and A chains)" evidence="1">
    <location>
        <begin position="10"/>
        <end position="147"/>
    </location>
</feature>
<feature type="disulfide bond" description="Interchain (between B and A chains)" evidence="1">
    <location>
        <begin position="22"/>
        <end position="160"/>
    </location>
</feature>
<feature type="disulfide bond" evidence="1">
    <location>
        <begin position="146"/>
        <end position="151"/>
    </location>
</feature>
<feature type="non-terminal residue">
    <location>
        <position position="1"/>
    </location>
</feature>